<evidence type="ECO:0000250" key="1"/>
<proteinExistence type="inferred from homology"/>
<dbReference type="EMBL" id="BX571857">
    <property type="protein sequence ID" value="CAG43119.1"/>
    <property type="molecule type" value="Genomic_DNA"/>
</dbReference>
<dbReference type="RefSeq" id="WP_000809131.1">
    <property type="nucleotide sequence ID" value="NC_002953.3"/>
</dbReference>
<dbReference type="SMR" id="Q6G9F9"/>
<dbReference type="GeneID" id="98345769"/>
<dbReference type="KEGG" id="sas:SAS1343"/>
<dbReference type="HOGENOM" id="CLU_117621_6_1_9"/>
<dbReference type="GO" id="GO:0005737">
    <property type="term" value="C:cytoplasm"/>
    <property type="evidence" value="ECO:0007669"/>
    <property type="project" value="UniProtKB-SubCell"/>
</dbReference>
<dbReference type="GO" id="GO:0003676">
    <property type="term" value="F:nucleic acid binding"/>
    <property type="evidence" value="ECO:0007669"/>
    <property type="project" value="InterPro"/>
</dbReference>
<dbReference type="CDD" id="cd04458">
    <property type="entry name" value="CSP_CDS"/>
    <property type="match status" value="1"/>
</dbReference>
<dbReference type="FunFam" id="2.40.50.140:FF:000006">
    <property type="entry name" value="Cold shock protein CspC"/>
    <property type="match status" value="1"/>
</dbReference>
<dbReference type="Gene3D" id="6.20.370.130">
    <property type="match status" value="1"/>
</dbReference>
<dbReference type="Gene3D" id="2.40.50.140">
    <property type="entry name" value="Nucleic acid-binding proteins"/>
    <property type="match status" value="1"/>
</dbReference>
<dbReference type="InterPro" id="IPR012156">
    <property type="entry name" value="Cold_shock_CspA"/>
</dbReference>
<dbReference type="InterPro" id="IPR050181">
    <property type="entry name" value="Cold_shock_domain"/>
</dbReference>
<dbReference type="InterPro" id="IPR011129">
    <property type="entry name" value="CSD"/>
</dbReference>
<dbReference type="InterPro" id="IPR019844">
    <property type="entry name" value="CSD_CS"/>
</dbReference>
<dbReference type="InterPro" id="IPR002059">
    <property type="entry name" value="CSP_DNA-bd"/>
</dbReference>
<dbReference type="InterPro" id="IPR012340">
    <property type="entry name" value="NA-bd_OB-fold"/>
</dbReference>
<dbReference type="PANTHER" id="PTHR11544">
    <property type="entry name" value="COLD SHOCK DOMAIN CONTAINING PROTEINS"/>
    <property type="match status" value="1"/>
</dbReference>
<dbReference type="Pfam" id="PF00313">
    <property type="entry name" value="CSD"/>
    <property type="match status" value="1"/>
</dbReference>
<dbReference type="PIRSF" id="PIRSF002599">
    <property type="entry name" value="Cold_shock_A"/>
    <property type="match status" value="1"/>
</dbReference>
<dbReference type="PRINTS" id="PR00050">
    <property type="entry name" value="COLDSHOCK"/>
</dbReference>
<dbReference type="SMART" id="SM00357">
    <property type="entry name" value="CSP"/>
    <property type="match status" value="1"/>
</dbReference>
<dbReference type="SUPFAM" id="SSF50249">
    <property type="entry name" value="Nucleic acid-binding proteins"/>
    <property type="match status" value="1"/>
</dbReference>
<dbReference type="PROSITE" id="PS00352">
    <property type="entry name" value="CSD_1"/>
    <property type="match status" value="1"/>
</dbReference>
<dbReference type="PROSITE" id="PS51857">
    <property type="entry name" value="CSD_2"/>
    <property type="match status" value="1"/>
</dbReference>
<name>CSPA_STAAS</name>
<keyword id="KW-0963">Cytoplasm</keyword>
<protein>
    <recommendedName>
        <fullName>Cold shock protein CspA</fullName>
    </recommendedName>
</protein>
<sequence length="66" mass="7321">MKQGTVKWFNAEKGFGFIEVEGENDVFVHFSAINQDGYKSLEEGQAVEFEVVEGDRGPQAANVVKL</sequence>
<reference key="1">
    <citation type="journal article" date="2004" name="Proc. Natl. Acad. Sci. U.S.A.">
        <title>Complete genomes of two clinical Staphylococcus aureus strains: evidence for the rapid evolution of virulence and drug resistance.</title>
        <authorList>
            <person name="Holden M.T.G."/>
            <person name="Feil E.J."/>
            <person name="Lindsay J.A."/>
            <person name="Peacock S.J."/>
            <person name="Day N.P.J."/>
            <person name="Enright M.C."/>
            <person name="Foster T.J."/>
            <person name="Moore C.E."/>
            <person name="Hurst L."/>
            <person name="Atkin R."/>
            <person name="Barron A."/>
            <person name="Bason N."/>
            <person name="Bentley S.D."/>
            <person name="Chillingworth C."/>
            <person name="Chillingworth T."/>
            <person name="Churcher C."/>
            <person name="Clark L."/>
            <person name="Corton C."/>
            <person name="Cronin A."/>
            <person name="Doggett J."/>
            <person name="Dowd L."/>
            <person name="Feltwell T."/>
            <person name="Hance Z."/>
            <person name="Harris B."/>
            <person name="Hauser H."/>
            <person name="Holroyd S."/>
            <person name="Jagels K."/>
            <person name="James K.D."/>
            <person name="Lennard N."/>
            <person name="Line A."/>
            <person name="Mayes R."/>
            <person name="Moule S."/>
            <person name="Mungall K."/>
            <person name="Ormond D."/>
            <person name="Quail M.A."/>
            <person name="Rabbinowitsch E."/>
            <person name="Rutherford K.M."/>
            <person name="Sanders M."/>
            <person name="Sharp S."/>
            <person name="Simmonds M."/>
            <person name="Stevens K."/>
            <person name="Whitehead S."/>
            <person name="Barrell B.G."/>
            <person name="Spratt B.G."/>
            <person name="Parkhill J."/>
        </authorList>
    </citation>
    <scope>NUCLEOTIDE SEQUENCE [LARGE SCALE GENOMIC DNA]</scope>
    <source>
        <strain>MSSA476</strain>
    </source>
</reference>
<gene>
    <name type="primary">cspA</name>
    <name type="ordered locus">SAS1343</name>
</gene>
<accession>Q6G9F9</accession>
<organism>
    <name type="scientific">Staphylococcus aureus (strain MSSA476)</name>
    <dbReference type="NCBI Taxonomy" id="282459"/>
    <lineage>
        <taxon>Bacteria</taxon>
        <taxon>Bacillati</taxon>
        <taxon>Bacillota</taxon>
        <taxon>Bacilli</taxon>
        <taxon>Bacillales</taxon>
        <taxon>Staphylococcaceae</taxon>
        <taxon>Staphylococcus</taxon>
    </lineage>
</organism>
<feature type="chain" id="PRO_0000262545" description="Cold shock protein CspA">
    <location>
        <begin position="1"/>
        <end position="66"/>
    </location>
</feature>
<feature type="domain" description="CSD">
    <location>
        <begin position="1"/>
        <end position="66"/>
    </location>
</feature>
<comment type="function">
    <text evidence="1">Involved in cold stress response.</text>
</comment>
<comment type="subcellular location">
    <subcellularLocation>
        <location evidence="1">Cytoplasm</location>
    </subcellularLocation>
</comment>